<accession>P37937</accession>
<proteinExistence type="evidence at transcript level"/>
<evidence type="ECO:0000256" key="1">
    <source>
        <dbReference type="SAM" id="MobiDB-lite"/>
    </source>
</evidence>
<evidence type="ECO:0000305" key="2"/>
<reference key="1">
    <citation type="journal article" date="1992" name="Proc. Natl. Acad. Sci. U.S.A.">
        <title>The A alpha mating locus of Schizophyllum commune encodes two dissimilar multiallelic homeodomain proteins.</title>
        <authorList>
            <person name="Stankis M.M."/>
            <person name="Specht C.A."/>
            <person name="Yang H."/>
            <person name="Giasson L."/>
            <person name="Ullrich R.C."/>
            <person name="Novotny C.P."/>
        </authorList>
    </citation>
    <scope>NUCLEOTIDE SEQUENCE [GENOMIC DNA]</scope>
    <source>
        <strain>UVM 9-4</strain>
    </source>
</reference>
<protein>
    <recommendedName>
        <fullName>Mating-type protein A-alpha Z3</fullName>
    </recommendedName>
</protein>
<sequence length="891" mass="97306">MLLGEEDIIQALSTAQTDFLDALAEGPEAVLTFQTRWGVLRASIDSDLPLQPSTLELSDRVSYAIADLAEVLLTQEANNKAIEDDLSNDLVAQFHQYEAFEALEFSENDCEWQENMPPVPPFIGACYEWLLQHLHNPYPSNEGRLTPPSSPRSACSILPSLKPALDTCKTFDDIDRWFSAARIRIGWTHICDTKFGGDKAMMLEAARVMWGSSDEEYEERNFAAGCVSRRSVSPKREEIPSYLKSPHDSIAFQARLPEAHEEPAERHCTPPREPPCLDPDVELAFACMETRAHEMYAHRLEPSELVDTLSASALPREAVNDVECQEAIARAAHEKRQQARREQRQAKNERDAAQMREEQRASYPSPEPSSDDEGEDEDDEESTDAYDSEASDSEDDSDSDTDSHYSQPFASYARGRTSFLSDVSALADDEDEASDDDEDDNVEGDDESEEEEEEEDTTPPPKLAGSKRRADEDIDGQAEEKRLRSASVPHFMYPPSPKSPMVVKRAAHKRPTRRASPSLIRLSPPPAPVTMGPDGVPLGTVPSKTTKAPASTSTTKSSTVQVHIPLPAPSSRSIPSSGIKVTGDPTPWVNWDLNAAVPCGQSKAEYLDSVGSSRPQRRASTSSSSSTSSSLSRTPSLTSLSSLSSGSSVSTCETVGTDSSEPAVHVQASETATEAPIKSAAHVHPLFNPDVWSQYNLDATADVEFHRGKGRKASSFRPAKLLVEAVDLSTSPSQHWTPSVRSRTRLAPSVAAPVTSYHHAAGTVTSPIESSFGQGQLTSILSTGPKAGITRRQTPPAKRRVSPRAQEPVEPSSLVDDIISSGLVVVCKEITPVKAPKKDRRYAERAERRASKANSFDSPDTVRARLAEIEQEAARLEAERLSLQRIASVGG</sequence>
<comment type="function">
    <text>Specifies A-alpha-3 mating-type. May regulate the expression of genes specific to the homokaryotic cell type.</text>
</comment>
<comment type="subcellular location">
    <subcellularLocation>
        <location>Nucleus</location>
    </subcellularLocation>
</comment>
<comment type="developmental stage">
    <text>Expressed constitutively in homokaryons.</text>
</comment>
<comment type="similarity">
    <text evidence="2">Belongs to the TALE/M-ATYP homeobox family.</text>
</comment>
<keyword id="KW-0238">DNA-binding</keyword>
<keyword id="KW-0371">Homeobox</keyword>
<keyword id="KW-0539">Nucleus</keyword>
<keyword id="KW-0804">Transcription</keyword>
<keyword id="KW-0805">Transcription regulation</keyword>
<name>MAAZ3_SCHCO</name>
<organism>
    <name type="scientific">Schizophyllum commune</name>
    <name type="common">Split gill fungus</name>
    <dbReference type="NCBI Taxonomy" id="5334"/>
    <lineage>
        <taxon>Eukaryota</taxon>
        <taxon>Fungi</taxon>
        <taxon>Dikarya</taxon>
        <taxon>Basidiomycota</taxon>
        <taxon>Agaricomycotina</taxon>
        <taxon>Agaricomycetes</taxon>
        <taxon>Agaricomycetidae</taxon>
        <taxon>Agaricales</taxon>
        <taxon>Schizophyllaceae</taxon>
        <taxon>Schizophyllum</taxon>
    </lineage>
</organism>
<dbReference type="EMBL" id="M97180">
    <property type="protein sequence ID" value="AAB01369.1"/>
    <property type="molecule type" value="Genomic_DNA"/>
</dbReference>
<dbReference type="PIR" id="B46203">
    <property type="entry name" value="B46203"/>
</dbReference>
<dbReference type="VEuPathDB" id="FungiDB:SCHCODRAFT_02696654"/>
<dbReference type="GO" id="GO:0005634">
    <property type="term" value="C:nucleus"/>
    <property type="evidence" value="ECO:0007669"/>
    <property type="project" value="UniProtKB-SubCell"/>
</dbReference>
<dbReference type="GO" id="GO:0003677">
    <property type="term" value="F:DNA binding"/>
    <property type="evidence" value="ECO:0007669"/>
    <property type="project" value="UniProtKB-KW"/>
</dbReference>
<dbReference type="InterPro" id="IPR024333">
    <property type="entry name" value="Mating-type_A-alpha/beta_1_N"/>
</dbReference>
<dbReference type="Pfam" id="PF12731">
    <property type="entry name" value="Mating_N"/>
    <property type="match status" value="1"/>
</dbReference>
<feature type="chain" id="PRO_0000049190" description="Mating-type protein A-alpha Z3">
    <location>
        <begin position="1"/>
        <end position="891"/>
    </location>
</feature>
<feature type="DNA-binding region" description="Homeobox; TALE-type">
    <location>
        <begin position="111"/>
        <end position="189"/>
    </location>
</feature>
<feature type="region of interest" description="Disordered" evidence="1">
    <location>
        <begin position="331"/>
        <end position="592"/>
    </location>
</feature>
<feature type="region of interest" description="Disordered" evidence="1">
    <location>
        <begin position="606"/>
        <end position="671"/>
    </location>
</feature>
<feature type="region of interest" description="Disordered" evidence="1">
    <location>
        <begin position="779"/>
        <end position="812"/>
    </location>
</feature>
<feature type="region of interest" description="Disordered" evidence="1">
    <location>
        <begin position="836"/>
        <end position="861"/>
    </location>
</feature>
<feature type="compositionally biased region" description="Basic and acidic residues" evidence="1">
    <location>
        <begin position="331"/>
        <end position="360"/>
    </location>
</feature>
<feature type="compositionally biased region" description="Acidic residues" evidence="1">
    <location>
        <begin position="369"/>
        <end position="400"/>
    </location>
</feature>
<feature type="compositionally biased region" description="Acidic residues" evidence="1">
    <location>
        <begin position="427"/>
        <end position="457"/>
    </location>
</feature>
<feature type="compositionally biased region" description="Low complexity" evidence="1">
    <location>
        <begin position="542"/>
        <end position="559"/>
    </location>
</feature>
<feature type="compositionally biased region" description="Low complexity" evidence="1">
    <location>
        <begin position="612"/>
        <end position="650"/>
    </location>
</feature>
<feature type="compositionally biased region" description="Polar residues" evidence="1">
    <location>
        <begin position="651"/>
        <end position="660"/>
    </location>
</feature>
<feature type="compositionally biased region" description="Basic and acidic residues" evidence="1">
    <location>
        <begin position="841"/>
        <end position="850"/>
    </location>
</feature>